<reference key="1">
    <citation type="journal article" date="2000" name="J. Biol. Chem.">
        <title>Identification and cloning of two histone fold motif-containing subunits of HeLa DNA polymerase epsilon.</title>
        <authorList>
            <person name="Li Y."/>
            <person name="Pursell Z.F."/>
            <person name="Linn S."/>
        </authorList>
    </citation>
    <scope>NUCLEOTIDE SEQUENCE [GENOMIC DNA]</scope>
    <scope>FUNCTION</scope>
    <scope>IDENTIFICATION IN EPSILON DNA POLYMERASE COMPLEX</scope>
    <scope>VARIANT VAL-17</scope>
    <source>
        <tissue>Cervix carcinoma</tissue>
    </source>
</reference>
<reference key="2">
    <citation type="journal article" date="2005" name="Nature">
        <title>Generation and annotation of the DNA sequences of human chromosomes 2 and 4.</title>
        <authorList>
            <person name="Hillier L.W."/>
            <person name="Graves T.A."/>
            <person name="Fulton R.S."/>
            <person name="Fulton L.A."/>
            <person name="Pepin K.H."/>
            <person name="Minx P."/>
            <person name="Wagner-McPherson C."/>
            <person name="Layman D."/>
            <person name="Wylie K."/>
            <person name="Sekhon M."/>
            <person name="Becker M.C."/>
            <person name="Fewell G.A."/>
            <person name="Delehaunty K.D."/>
            <person name="Miner T.L."/>
            <person name="Nash W.E."/>
            <person name="Kremitzki C."/>
            <person name="Oddy L."/>
            <person name="Du H."/>
            <person name="Sun H."/>
            <person name="Bradshaw-Cordum H."/>
            <person name="Ali J."/>
            <person name="Carter J."/>
            <person name="Cordes M."/>
            <person name="Harris A."/>
            <person name="Isak A."/>
            <person name="van Brunt A."/>
            <person name="Nguyen C."/>
            <person name="Du F."/>
            <person name="Courtney L."/>
            <person name="Kalicki J."/>
            <person name="Ozersky P."/>
            <person name="Abbott S."/>
            <person name="Armstrong J."/>
            <person name="Belter E.A."/>
            <person name="Caruso L."/>
            <person name="Cedroni M."/>
            <person name="Cotton M."/>
            <person name="Davidson T."/>
            <person name="Desai A."/>
            <person name="Elliott G."/>
            <person name="Erb T."/>
            <person name="Fronick C."/>
            <person name="Gaige T."/>
            <person name="Haakenson W."/>
            <person name="Haglund K."/>
            <person name="Holmes A."/>
            <person name="Harkins R."/>
            <person name="Kim K."/>
            <person name="Kruchowski S.S."/>
            <person name="Strong C.M."/>
            <person name="Grewal N."/>
            <person name="Goyea E."/>
            <person name="Hou S."/>
            <person name="Levy A."/>
            <person name="Martinka S."/>
            <person name="Mead K."/>
            <person name="McLellan M.D."/>
            <person name="Meyer R."/>
            <person name="Randall-Maher J."/>
            <person name="Tomlinson C."/>
            <person name="Dauphin-Kohlberg S."/>
            <person name="Kozlowicz-Reilly A."/>
            <person name="Shah N."/>
            <person name="Swearengen-Shahid S."/>
            <person name="Snider J."/>
            <person name="Strong J.T."/>
            <person name="Thompson J."/>
            <person name="Yoakum M."/>
            <person name="Leonard S."/>
            <person name="Pearman C."/>
            <person name="Trani L."/>
            <person name="Radionenko M."/>
            <person name="Waligorski J.E."/>
            <person name="Wang C."/>
            <person name="Rock S.M."/>
            <person name="Tin-Wollam A.-M."/>
            <person name="Maupin R."/>
            <person name="Latreille P."/>
            <person name="Wendl M.C."/>
            <person name="Yang S.-P."/>
            <person name="Pohl C."/>
            <person name="Wallis J.W."/>
            <person name="Spieth J."/>
            <person name="Bieri T.A."/>
            <person name="Berkowicz N."/>
            <person name="Nelson J.O."/>
            <person name="Osborne J."/>
            <person name="Ding L."/>
            <person name="Meyer R."/>
            <person name="Sabo A."/>
            <person name="Shotland Y."/>
            <person name="Sinha P."/>
            <person name="Wohldmann P.E."/>
            <person name="Cook L.L."/>
            <person name="Hickenbotham M.T."/>
            <person name="Eldred J."/>
            <person name="Williams D."/>
            <person name="Jones T.A."/>
            <person name="She X."/>
            <person name="Ciccarelli F.D."/>
            <person name="Izaurralde E."/>
            <person name="Taylor J."/>
            <person name="Schmutz J."/>
            <person name="Myers R.M."/>
            <person name="Cox D.R."/>
            <person name="Huang X."/>
            <person name="McPherson J.D."/>
            <person name="Mardis E.R."/>
            <person name="Clifton S.W."/>
            <person name="Warren W.C."/>
            <person name="Chinwalla A.T."/>
            <person name="Eddy S.R."/>
            <person name="Marra M.A."/>
            <person name="Ovcharenko I."/>
            <person name="Furey T.S."/>
            <person name="Miller W."/>
            <person name="Eichler E.E."/>
            <person name="Bork P."/>
            <person name="Suyama M."/>
            <person name="Torrents D."/>
            <person name="Waterston R.H."/>
            <person name="Wilson R.K."/>
        </authorList>
    </citation>
    <scope>NUCLEOTIDE SEQUENCE [LARGE SCALE GENOMIC DNA]</scope>
</reference>
<reference key="3">
    <citation type="journal article" date="2004" name="Genome Res.">
        <title>The status, quality, and expansion of the NIH full-length cDNA project: the Mammalian Gene Collection (MGC).</title>
        <authorList>
            <consortium name="The MGC Project Team"/>
        </authorList>
    </citation>
    <scope>NUCLEOTIDE SEQUENCE [LARGE SCALE MRNA]</scope>
    <scope>VARIANT VAL-17</scope>
    <source>
        <tissue>Skin</tissue>
    </source>
</reference>
<reference key="4">
    <citation type="journal article" date="2007" name="Science">
        <title>ATM and ATR substrate analysis reveals extensive protein networks responsive to DNA damage.</title>
        <authorList>
            <person name="Matsuoka S."/>
            <person name="Ballif B.A."/>
            <person name="Smogorzewska A."/>
            <person name="McDonald E.R. III"/>
            <person name="Hurov K.E."/>
            <person name="Luo J."/>
            <person name="Bakalarski C.E."/>
            <person name="Zhao Z."/>
            <person name="Solimini N."/>
            <person name="Lerenthal Y."/>
            <person name="Shiloh Y."/>
            <person name="Gygi S.P."/>
            <person name="Elledge S.J."/>
        </authorList>
    </citation>
    <scope>PHOSPHORYLATION [LARGE SCALE ANALYSIS] AT SER-25</scope>
    <scope>VARIANT [LARGE SCALE ANALYSIS] VAL-17</scope>
    <scope>IDENTIFICATION BY MASS SPECTROMETRY [LARGE SCALE ANALYSIS]</scope>
    <source>
        <tissue>Embryonic kidney</tissue>
    </source>
</reference>
<reference key="5">
    <citation type="journal article" date="2009" name="Anal. Chem.">
        <title>Lys-N and trypsin cover complementary parts of the phosphoproteome in a refined SCX-based approach.</title>
        <authorList>
            <person name="Gauci S."/>
            <person name="Helbig A.O."/>
            <person name="Slijper M."/>
            <person name="Krijgsveld J."/>
            <person name="Heck A.J."/>
            <person name="Mohammed S."/>
        </authorList>
    </citation>
    <scope>ACETYLATION [LARGE SCALE ANALYSIS] AT ALA-2</scope>
    <scope>CLEAVAGE OF INITIATOR METHIONINE [LARGE SCALE ANALYSIS]</scope>
    <scope>IDENTIFICATION BY MASS SPECTROMETRY [LARGE SCALE ANALYSIS]</scope>
</reference>
<reference key="6">
    <citation type="journal article" date="2010" name="Sci. Signal.">
        <title>Quantitative phosphoproteomics reveals widespread full phosphorylation site occupancy during mitosis.</title>
        <authorList>
            <person name="Olsen J.V."/>
            <person name="Vermeulen M."/>
            <person name="Santamaria A."/>
            <person name="Kumar C."/>
            <person name="Miller M.L."/>
            <person name="Jensen L.J."/>
            <person name="Gnad F."/>
            <person name="Cox J."/>
            <person name="Jensen T.S."/>
            <person name="Nigg E.A."/>
            <person name="Brunak S."/>
            <person name="Mann M."/>
        </authorList>
    </citation>
    <scope>ACETYLATION [LARGE SCALE ANALYSIS] AT ALA-2</scope>
    <scope>PHOSPHORYLATION [LARGE SCALE ANALYSIS] AT THR-11</scope>
    <scope>CLEAVAGE OF INITIATOR METHIONINE [LARGE SCALE ANALYSIS]</scope>
    <scope>IDENTIFICATION BY MASS SPECTROMETRY [LARGE SCALE ANALYSIS]</scope>
    <source>
        <tissue>Cervix carcinoma</tissue>
    </source>
</reference>
<reference key="7">
    <citation type="journal article" date="2011" name="BMC Syst. Biol.">
        <title>Initial characterization of the human central proteome.</title>
        <authorList>
            <person name="Burkard T.R."/>
            <person name="Planyavsky M."/>
            <person name="Kaupe I."/>
            <person name="Breitwieser F.P."/>
            <person name="Buerckstuemmer T."/>
            <person name="Bennett K.L."/>
            <person name="Superti-Furga G."/>
            <person name="Colinge J."/>
        </authorList>
    </citation>
    <scope>IDENTIFICATION BY MASS SPECTROMETRY [LARGE SCALE ANALYSIS]</scope>
</reference>
<reference key="8">
    <citation type="journal article" date="2012" name="Proc. Natl. Acad. Sci. U.S.A.">
        <title>N-terminal acetylome analyses and functional insights of the N-terminal acetyltransferase NatB.</title>
        <authorList>
            <person name="Van Damme P."/>
            <person name="Lasa M."/>
            <person name="Polevoda B."/>
            <person name="Gazquez C."/>
            <person name="Elosegui-Artola A."/>
            <person name="Kim D.S."/>
            <person name="De Juan-Pardo E."/>
            <person name="Demeyer K."/>
            <person name="Hole K."/>
            <person name="Larrea E."/>
            <person name="Timmerman E."/>
            <person name="Prieto J."/>
            <person name="Arnesen T."/>
            <person name="Sherman F."/>
            <person name="Gevaert K."/>
            <person name="Aldabe R."/>
        </authorList>
    </citation>
    <scope>ACETYLATION [LARGE SCALE ANALYSIS] AT ALA-2</scope>
    <scope>CLEAVAGE OF INITIATOR METHIONINE [LARGE SCALE ANALYSIS]</scope>
    <scope>IDENTIFICATION BY MASS SPECTROMETRY [LARGE SCALE ANALYSIS]</scope>
</reference>
<reference key="9">
    <citation type="journal article" date="2014" name="J. Proteomics">
        <title>An enzyme assisted RP-RPLC approach for in-depth analysis of human liver phosphoproteome.</title>
        <authorList>
            <person name="Bian Y."/>
            <person name="Song C."/>
            <person name="Cheng K."/>
            <person name="Dong M."/>
            <person name="Wang F."/>
            <person name="Huang J."/>
            <person name="Sun D."/>
            <person name="Wang L."/>
            <person name="Ye M."/>
            <person name="Zou H."/>
        </authorList>
    </citation>
    <scope>IDENTIFICATION BY MASS SPECTROMETRY [LARGE SCALE ANALYSIS]</scope>
    <source>
        <tissue>Liver</tissue>
    </source>
</reference>
<keyword id="KW-0007">Acetylation</keyword>
<keyword id="KW-0238">DNA-binding</keyword>
<keyword id="KW-0539">Nucleus</keyword>
<keyword id="KW-0597">Phosphoprotein</keyword>
<keyword id="KW-1267">Proteomics identification</keyword>
<keyword id="KW-1185">Reference proteome</keyword>
<accession>Q9NR33</accession>
<accession>Q53TR2</accession>
<evidence type="ECO:0000250" key="1">
    <source>
        <dbReference type="UniProtKB" id="P27344"/>
    </source>
</evidence>
<evidence type="ECO:0000256" key="2">
    <source>
        <dbReference type="SAM" id="MobiDB-lite"/>
    </source>
</evidence>
<evidence type="ECO:0000269" key="3">
    <source>
    </source>
</evidence>
<evidence type="ECO:0000269" key="4">
    <source>
    </source>
</evidence>
<evidence type="ECO:0000305" key="5"/>
<evidence type="ECO:0007744" key="6">
    <source>
    </source>
</evidence>
<evidence type="ECO:0007744" key="7">
    <source>
    </source>
</evidence>
<evidence type="ECO:0007744" key="8">
    <source>
    </source>
</evidence>
<evidence type="ECO:0007744" key="9">
    <source>
    </source>
</evidence>
<gene>
    <name type="primary">POLE4</name>
</gene>
<organism>
    <name type="scientific">Homo sapiens</name>
    <name type="common">Human</name>
    <dbReference type="NCBI Taxonomy" id="9606"/>
    <lineage>
        <taxon>Eukaryota</taxon>
        <taxon>Metazoa</taxon>
        <taxon>Chordata</taxon>
        <taxon>Craniata</taxon>
        <taxon>Vertebrata</taxon>
        <taxon>Euteleostomi</taxon>
        <taxon>Mammalia</taxon>
        <taxon>Eutheria</taxon>
        <taxon>Euarchontoglires</taxon>
        <taxon>Primates</taxon>
        <taxon>Haplorrhini</taxon>
        <taxon>Catarrhini</taxon>
        <taxon>Hominidae</taxon>
        <taxon>Homo</taxon>
    </lineage>
</organism>
<proteinExistence type="evidence at protein level"/>
<comment type="function">
    <text evidence="1 3">Accessory component of the DNA polymerase epsilon complex (PubMed:10801849). Participates in DNA repair and in chromosomal DNA replication (By similarity).</text>
</comment>
<comment type="subunit">
    <text evidence="3">Component of the DNA polymerase epsilon complex consisting of four subunits: the catalytic subunit POLE and the accessory subunits POLE2, POLE3 and POLE4. Interaction with POLE3 is a prerequisite for further binding with POLE and POLE2.</text>
</comment>
<comment type="interaction">
    <interactant intactId="EBI-867034">
        <id>Q9NR33</id>
    </interactant>
    <interactant intactId="EBI-389728">
        <id>P25208</id>
        <label>NFYB</label>
    </interactant>
    <organismsDiffer>false</organismsDiffer>
    <experiments>12</experiments>
</comment>
<comment type="interaction">
    <interactant intactId="EBI-867034">
        <id>Q9NR33</id>
    </interactant>
    <interactant intactId="EBI-744901">
        <id>Q9NRF9</id>
        <label>POLE3</label>
    </interactant>
    <organismsDiffer>false</organismsDiffer>
    <experiments>8</experiments>
</comment>
<comment type="interaction">
    <interactant intactId="EBI-867034">
        <id>Q9NR33</id>
    </interactant>
    <interactant intactId="EBI-2805516">
        <id>P31321</id>
        <label>PRKAR1B</label>
    </interactant>
    <organismsDiffer>false</organismsDiffer>
    <experiments>3</experiments>
</comment>
<comment type="interaction">
    <interactant intactId="EBI-867034">
        <id>Q9NR33</id>
    </interactant>
    <interactant intactId="EBI-6248094">
        <id>Q9Q2G4</id>
        <label>ORF</label>
    </interactant>
    <organismsDiffer>true</organismsDiffer>
    <experiments>2</experiments>
</comment>
<comment type="subcellular location">
    <subcellularLocation>
        <location evidence="5">Nucleus</location>
    </subcellularLocation>
</comment>
<name>DPOE4_HUMAN</name>
<sequence>MAAAAAAGSGTPREEEGPAGEAAASQPQAPTSVPGARLSRLPLARVKALVKADPDVTLAGQEAIFILARAAELFVETIAKDAYCCAQQGKRKTLQRRDLDNAIEAVDEFAFLEGTLD</sequence>
<protein>
    <recommendedName>
        <fullName>DNA polymerase epsilon subunit 4</fullName>
    </recommendedName>
    <alternativeName>
        <fullName>DNA polymerase II subunit 4</fullName>
    </alternativeName>
    <alternativeName>
        <fullName>DNA polymerase epsilon subunit p12</fullName>
    </alternativeName>
</protein>
<dbReference type="EMBL" id="AF261688">
    <property type="protein sequence ID" value="AAF90132.1"/>
    <property type="molecule type" value="Genomic_DNA"/>
</dbReference>
<dbReference type="EMBL" id="AC007400">
    <property type="protein sequence ID" value="AAY15030.1"/>
    <property type="molecule type" value="Genomic_DNA"/>
</dbReference>
<dbReference type="EMBL" id="BC031331">
    <property type="protein sequence ID" value="AAH31331.1"/>
    <property type="molecule type" value="mRNA"/>
</dbReference>
<dbReference type="CCDS" id="CCDS1957.1"/>
<dbReference type="RefSeq" id="NP_063949.2">
    <property type="nucleotide sequence ID" value="NM_019896.3"/>
</dbReference>
<dbReference type="SMR" id="Q9NR33"/>
<dbReference type="BioGRID" id="121168">
    <property type="interactions" value="36"/>
</dbReference>
<dbReference type="ComplexPortal" id="CPX-2108">
    <property type="entry name" value="DNA polymerase epsilon complex"/>
</dbReference>
<dbReference type="CORUM" id="Q9NR33"/>
<dbReference type="FunCoup" id="Q9NR33">
    <property type="interactions" value="1987"/>
</dbReference>
<dbReference type="IntAct" id="Q9NR33">
    <property type="interactions" value="23"/>
</dbReference>
<dbReference type="MINT" id="Q9NR33"/>
<dbReference type="STRING" id="9606.ENSP00000420176"/>
<dbReference type="DrugBank" id="DB00242">
    <property type="generic name" value="Cladribine"/>
</dbReference>
<dbReference type="GlyGen" id="Q9NR33">
    <property type="glycosylation" value="1 site, 1 O-linked glycan (1 site)"/>
</dbReference>
<dbReference type="iPTMnet" id="Q9NR33"/>
<dbReference type="PhosphoSitePlus" id="Q9NR33"/>
<dbReference type="BioMuta" id="POLE4"/>
<dbReference type="DMDM" id="116241340"/>
<dbReference type="jPOST" id="Q9NR33"/>
<dbReference type="MassIVE" id="Q9NR33"/>
<dbReference type="PaxDb" id="9606-ENSP00000420176"/>
<dbReference type="PeptideAtlas" id="Q9NR33"/>
<dbReference type="ProteomicsDB" id="82268"/>
<dbReference type="Pumba" id="Q9NR33"/>
<dbReference type="TopDownProteomics" id="Q9NR33"/>
<dbReference type="Antibodypedia" id="31631">
    <property type="antibodies" value="78 antibodies from 17 providers"/>
</dbReference>
<dbReference type="DNASU" id="56655"/>
<dbReference type="Ensembl" id="ENST00000483063.2">
    <property type="protein sequence ID" value="ENSP00000420176.1"/>
    <property type="gene ID" value="ENSG00000115350.12"/>
</dbReference>
<dbReference type="GeneID" id="56655"/>
<dbReference type="KEGG" id="hsa:56655"/>
<dbReference type="MANE-Select" id="ENST00000483063.2">
    <property type="protein sequence ID" value="ENSP00000420176.1"/>
    <property type="RefSeq nucleotide sequence ID" value="NM_019896.4"/>
    <property type="RefSeq protein sequence ID" value="NP_063949.2"/>
</dbReference>
<dbReference type="UCSC" id="uc002snf.4">
    <property type="organism name" value="human"/>
</dbReference>
<dbReference type="AGR" id="HGNC:18755"/>
<dbReference type="CTD" id="56655"/>
<dbReference type="DisGeNET" id="56655"/>
<dbReference type="GeneCards" id="POLE4"/>
<dbReference type="HGNC" id="HGNC:18755">
    <property type="gene designation" value="POLE4"/>
</dbReference>
<dbReference type="HPA" id="ENSG00000115350">
    <property type="expression patterns" value="Low tissue specificity"/>
</dbReference>
<dbReference type="MIM" id="607269">
    <property type="type" value="gene"/>
</dbReference>
<dbReference type="neXtProt" id="NX_Q9NR33"/>
<dbReference type="OpenTargets" id="ENSG00000115350"/>
<dbReference type="PharmGKB" id="PA38677"/>
<dbReference type="VEuPathDB" id="HostDB:ENSG00000115350"/>
<dbReference type="eggNOG" id="KOG1658">
    <property type="taxonomic scope" value="Eukaryota"/>
</dbReference>
<dbReference type="GeneTree" id="ENSGT00940000160888"/>
<dbReference type="HOGENOM" id="CLU_045277_8_0_1"/>
<dbReference type="InParanoid" id="Q9NR33"/>
<dbReference type="OMA" id="CYAFLEG"/>
<dbReference type="OrthoDB" id="636685at2759"/>
<dbReference type="PAN-GO" id="Q9NR33">
    <property type="GO annotations" value="2 GO annotations based on evolutionary models"/>
</dbReference>
<dbReference type="PhylomeDB" id="Q9NR33"/>
<dbReference type="TreeFam" id="TF103009"/>
<dbReference type="BRENDA" id="2.7.7.7">
    <property type="organism ID" value="2681"/>
</dbReference>
<dbReference type="PathwayCommons" id="Q9NR33"/>
<dbReference type="Reactome" id="R-HSA-110314">
    <property type="pathway name" value="Recognition of DNA damage by PCNA-containing replication complex"/>
</dbReference>
<dbReference type="Reactome" id="R-HSA-5651801">
    <property type="pathway name" value="PCNA-Dependent Long Patch Base Excision Repair"/>
</dbReference>
<dbReference type="Reactome" id="R-HSA-5656169">
    <property type="pathway name" value="Termination of translesion DNA synthesis"/>
</dbReference>
<dbReference type="Reactome" id="R-HSA-5685942">
    <property type="pathway name" value="HDR through Homologous Recombination (HRR)"/>
</dbReference>
<dbReference type="Reactome" id="R-HSA-5696397">
    <property type="pathway name" value="Gap-filling DNA repair synthesis and ligation in GG-NER"/>
</dbReference>
<dbReference type="Reactome" id="R-HSA-5696400">
    <property type="pathway name" value="Dual Incision in GG-NER"/>
</dbReference>
<dbReference type="Reactome" id="R-HSA-6782135">
    <property type="pathway name" value="Dual incision in TC-NER"/>
</dbReference>
<dbReference type="Reactome" id="R-HSA-6782210">
    <property type="pathway name" value="Gap-filling DNA repair synthesis and ligation in TC-NER"/>
</dbReference>
<dbReference type="Reactome" id="R-HSA-68952">
    <property type="pathway name" value="DNA replication initiation"/>
</dbReference>
<dbReference type="Reactome" id="R-HSA-68962">
    <property type="pathway name" value="Activation of the pre-replicative complex"/>
</dbReference>
<dbReference type="SignaLink" id="Q9NR33"/>
<dbReference type="SIGNOR" id="Q9NR33"/>
<dbReference type="BioGRID-ORCS" id="56655">
    <property type="hits" value="114 hits in 1163 CRISPR screens"/>
</dbReference>
<dbReference type="ChiTaRS" id="POLE4">
    <property type="organism name" value="human"/>
</dbReference>
<dbReference type="GenomeRNAi" id="56655"/>
<dbReference type="Pharos" id="Q9NR33">
    <property type="development level" value="Tbio"/>
</dbReference>
<dbReference type="PRO" id="PR:Q9NR33"/>
<dbReference type="Proteomes" id="UP000005640">
    <property type="component" value="Chromosome 2"/>
</dbReference>
<dbReference type="RNAct" id="Q9NR33">
    <property type="molecule type" value="protein"/>
</dbReference>
<dbReference type="Bgee" id="ENSG00000115350">
    <property type="expression patterns" value="Expressed in granulocyte and 171 other cell types or tissues"/>
</dbReference>
<dbReference type="GO" id="GO:0140672">
    <property type="term" value="C:ATAC complex"/>
    <property type="evidence" value="ECO:0000314"/>
    <property type="project" value="BHF-UCL"/>
</dbReference>
<dbReference type="GO" id="GO:0008622">
    <property type="term" value="C:epsilon DNA polymerase complex"/>
    <property type="evidence" value="ECO:0000314"/>
    <property type="project" value="UniProtKB"/>
</dbReference>
<dbReference type="GO" id="GO:0005654">
    <property type="term" value="C:nucleoplasm"/>
    <property type="evidence" value="ECO:0000314"/>
    <property type="project" value="HPA"/>
</dbReference>
<dbReference type="GO" id="GO:0005634">
    <property type="term" value="C:nucleus"/>
    <property type="evidence" value="ECO:0000318"/>
    <property type="project" value="GO_Central"/>
</dbReference>
<dbReference type="GO" id="GO:0003677">
    <property type="term" value="F:DNA binding"/>
    <property type="evidence" value="ECO:0007669"/>
    <property type="project" value="UniProtKB-KW"/>
</dbReference>
<dbReference type="GO" id="GO:0003887">
    <property type="term" value="F:DNA-directed DNA polymerase activity"/>
    <property type="evidence" value="ECO:0000304"/>
    <property type="project" value="ProtInc"/>
</dbReference>
<dbReference type="GO" id="GO:0046982">
    <property type="term" value="F:protein heterodimerization activity"/>
    <property type="evidence" value="ECO:0007669"/>
    <property type="project" value="InterPro"/>
</dbReference>
<dbReference type="GO" id="GO:0006261">
    <property type="term" value="P:DNA-templated DNA replication"/>
    <property type="evidence" value="ECO:0000314"/>
    <property type="project" value="ComplexPortal"/>
</dbReference>
<dbReference type="CDD" id="cd22929">
    <property type="entry name" value="HFD_POLE4-like"/>
    <property type="match status" value="1"/>
</dbReference>
<dbReference type="FunFam" id="1.10.20.10:FF:000051">
    <property type="entry name" value="DNA polymerase epsilon 4, accessory subunit"/>
    <property type="match status" value="1"/>
</dbReference>
<dbReference type="Gene3D" id="1.10.20.10">
    <property type="entry name" value="Histone, subunit A"/>
    <property type="match status" value="1"/>
</dbReference>
<dbReference type="InterPro" id="IPR003958">
    <property type="entry name" value="CBFA_NFYB_domain"/>
</dbReference>
<dbReference type="InterPro" id="IPR009072">
    <property type="entry name" value="Histone-fold"/>
</dbReference>
<dbReference type="InterPro" id="IPR050568">
    <property type="entry name" value="Transcr_DNA_Rep_Reg"/>
</dbReference>
<dbReference type="PANTHER" id="PTHR10252:SF79">
    <property type="entry name" value="DNA POLYMERASE EPSILON SUBUNIT 4"/>
    <property type="match status" value="1"/>
</dbReference>
<dbReference type="PANTHER" id="PTHR10252">
    <property type="entry name" value="HISTONE-LIKE TRANSCRIPTION FACTOR CCAAT-RELATED"/>
    <property type="match status" value="1"/>
</dbReference>
<dbReference type="Pfam" id="PF00808">
    <property type="entry name" value="CBFD_NFYB_HMF"/>
    <property type="match status" value="1"/>
</dbReference>
<dbReference type="SUPFAM" id="SSF47113">
    <property type="entry name" value="Histone-fold"/>
    <property type="match status" value="1"/>
</dbReference>
<feature type="initiator methionine" description="Removed" evidence="7 8 9">
    <location>
        <position position="1"/>
    </location>
</feature>
<feature type="chain" id="PRO_0000191746" description="DNA polymerase epsilon subunit 4">
    <location>
        <begin position="2"/>
        <end position="117"/>
    </location>
</feature>
<feature type="region of interest" description="Disordered" evidence="2">
    <location>
        <begin position="1"/>
        <end position="36"/>
    </location>
</feature>
<feature type="compositionally biased region" description="Low complexity" evidence="2">
    <location>
        <begin position="19"/>
        <end position="30"/>
    </location>
</feature>
<feature type="modified residue" description="N-acetylalanine" evidence="7 8 9">
    <location>
        <position position="2"/>
    </location>
</feature>
<feature type="modified residue" description="Phosphothreonine" evidence="8">
    <location>
        <position position="11"/>
    </location>
</feature>
<feature type="modified residue" description="Phosphoserine" evidence="6">
    <location>
        <position position="25"/>
    </location>
</feature>
<feature type="sequence variant" id="VAR_028050" description="In dbSNP:rs12366." evidence="3 4 6">
    <original>G</original>
    <variation>V</variation>
    <location>
        <position position="17"/>
    </location>
</feature>